<comment type="subunit">
    <text evidence="1">Interacts with Pde6.</text>
</comment>
<comment type="subcellular location">
    <subcellularLocation>
        <location evidence="1">Nucleus</location>
    </subcellularLocation>
    <subcellularLocation>
        <location evidence="1">Cytoplasm</location>
    </subcellularLocation>
</comment>
<comment type="similarity">
    <text evidence="2">Belongs to the PDE6D/unc-119 family.</text>
</comment>
<sequence length="151" mass="17404">MGSDDQSAGDRIQKGFQINYMILRDADSGKIIWQENKDFSAPDQEHEARVPVKILDMRAVSREINFSTIESMENFRLDQKVLFKGRIMEEWFFEMGFVGANTTNTWQSTIEAAPESQMMPAKVLNGNVTIQTSFYDNETLITKSVVRLYYI</sequence>
<name>PDE6D_DROSI</name>
<keyword id="KW-0140">cGMP</keyword>
<keyword id="KW-0963">Cytoplasm</keyword>
<keyword id="KW-0539">Nucleus</keyword>
<keyword id="KW-1185">Reference proteome</keyword>
<reference evidence="3" key="1">
    <citation type="journal article" date="2007" name="Nature">
        <title>Evolution of genes and genomes on the Drosophila phylogeny.</title>
        <authorList>
            <consortium name="Drosophila 12 genomes consortium"/>
        </authorList>
    </citation>
    <scope>NUCLEOTIDE SEQUENCE [LARGE SCALE GENOMIC DNA]</scope>
</reference>
<feature type="chain" id="PRO_0000363680" description="Probable cGMP 3',5'-cyclic phosphodiesterase subunit delta">
    <location>
        <begin position="1"/>
        <end position="151"/>
    </location>
</feature>
<evidence type="ECO:0000250" key="1">
    <source>
        <dbReference type="UniProtKB" id="Q9VLJ0"/>
    </source>
</evidence>
<evidence type="ECO:0000255" key="2"/>
<evidence type="ECO:0000312" key="3">
    <source>
        <dbReference type="EMBL" id="EDX04279.1"/>
    </source>
</evidence>
<protein>
    <recommendedName>
        <fullName>Probable cGMP 3',5'-cyclic phosphodiesterase subunit delta</fullName>
    </recommendedName>
</protein>
<organism>
    <name type="scientific">Drosophila simulans</name>
    <name type="common">Fruit fly</name>
    <dbReference type="NCBI Taxonomy" id="7240"/>
    <lineage>
        <taxon>Eukaryota</taxon>
        <taxon>Metazoa</taxon>
        <taxon>Ecdysozoa</taxon>
        <taxon>Arthropoda</taxon>
        <taxon>Hexapoda</taxon>
        <taxon>Insecta</taxon>
        <taxon>Pterygota</taxon>
        <taxon>Neoptera</taxon>
        <taxon>Endopterygota</taxon>
        <taxon>Diptera</taxon>
        <taxon>Brachycera</taxon>
        <taxon>Muscomorpha</taxon>
        <taxon>Ephydroidea</taxon>
        <taxon>Drosophilidae</taxon>
        <taxon>Drosophila</taxon>
        <taxon>Sophophora</taxon>
    </lineage>
</organism>
<gene>
    <name evidence="1" type="primary">PrBP</name>
    <name type="ORF">GD22388</name>
</gene>
<proteinExistence type="inferred from homology"/>
<accession>B4Q785</accession>
<dbReference type="EMBL" id="CM000361">
    <property type="protein sequence ID" value="EDX04279.1"/>
    <property type="molecule type" value="Genomic_DNA"/>
</dbReference>
<dbReference type="SMR" id="B4Q785"/>
<dbReference type="STRING" id="7240.B4Q785"/>
<dbReference type="EnsemblMetazoa" id="FBtr0351969">
    <property type="protein sequence ID" value="FBpp0316578"/>
    <property type="gene ID" value="FBgn0193794"/>
</dbReference>
<dbReference type="EnsemblMetazoa" id="XM_016178616.2">
    <property type="protein sequence ID" value="XP_016024220.1"/>
    <property type="gene ID" value="LOC27206514"/>
</dbReference>
<dbReference type="GeneID" id="27206514"/>
<dbReference type="HOGENOM" id="CLU_119682_0_0_1"/>
<dbReference type="OMA" id="STNTWQN"/>
<dbReference type="OrthoDB" id="10248777at2759"/>
<dbReference type="PhylomeDB" id="B4Q785"/>
<dbReference type="Proteomes" id="UP000000304">
    <property type="component" value="Chromosome 2L"/>
</dbReference>
<dbReference type="Bgee" id="FBgn0193794">
    <property type="expression patterns" value="Expressed in embryo and 3 other cell types or tissues"/>
</dbReference>
<dbReference type="GO" id="GO:0005737">
    <property type="term" value="C:cytoplasm"/>
    <property type="evidence" value="ECO:0000250"/>
    <property type="project" value="UniProtKB"/>
</dbReference>
<dbReference type="GO" id="GO:0005634">
    <property type="term" value="C:nucleus"/>
    <property type="evidence" value="ECO:0000250"/>
    <property type="project" value="UniProtKB"/>
</dbReference>
<dbReference type="GO" id="GO:0050953">
    <property type="term" value="P:sensory perception of light stimulus"/>
    <property type="evidence" value="ECO:0007669"/>
    <property type="project" value="InterPro"/>
</dbReference>
<dbReference type="FunFam" id="2.70.50.40:FF:000002">
    <property type="entry name" value="Retinal rod rhodopsin-sensitive cGMP 3',5'-cyclic phosphodiesterase subunit delta"/>
    <property type="match status" value="1"/>
</dbReference>
<dbReference type="Gene3D" id="2.70.50.40">
    <property type="entry name" value="GMP phosphodiesterase, delta subunit"/>
    <property type="match status" value="1"/>
</dbReference>
<dbReference type="InterPro" id="IPR014756">
    <property type="entry name" value="Ig_E-set"/>
</dbReference>
<dbReference type="InterPro" id="IPR008015">
    <property type="entry name" value="PDED_dom"/>
</dbReference>
<dbReference type="InterPro" id="IPR037036">
    <property type="entry name" value="PDED_dom_sf"/>
</dbReference>
<dbReference type="InterPro" id="IPR017287">
    <property type="entry name" value="Rhodop-sen_GMP-Pdiesterase_dsu"/>
</dbReference>
<dbReference type="PANTHER" id="PTHR12976">
    <property type="entry name" value="RETINAL ROD RHODOPSIN-SENSITIVE CGMP 3',5'-CYCLIC PHOSPHODIESTERASE DELTA-SUBUNIT"/>
    <property type="match status" value="1"/>
</dbReference>
<dbReference type="PANTHER" id="PTHR12976:SF0">
    <property type="entry name" value="RETINAL ROD RHODOPSIN-SENSITIVE CGMP 3',5'-CYCLIC PHOSPHODIESTERASE SUBUNIT DELTA"/>
    <property type="match status" value="1"/>
</dbReference>
<dbReference type="Pfam" id="PF05351">
    <property type="entry name" value="GMP_PDE_delta"/>
    <property type="match status" value="1"/>
</dbReference>
<dbReference type="PIRSF" id="PIRSF037825">
    <property type="entry name" value="GMP-Pdiesterase_delta"/>
    <property type="match status" value="1"/>
</dbReference>
<dbReference type="SUPFAM" id="SSF81296">
    <property type="entry name" value="E set domains"/>
    <property type="match status" value="1"/>
</dbReference>